<organism>
    <name type="scientific">Thermotoga maritima (strain ATCC 43589 / DSM 3109 / JCM 10099 / NBRC 100826 / MSB8)</name>
    <dbReference type="NCBI Taxonomy" id="243274"/>
    <lineage>
        <taxon>Bacteria</taxon>
        <taxon>Thermotogati</taxon>
        <taxon>Thermotogota</taxon>
        <taxon>Thermotogae</taxon>
        <taxon>Thermotogales</taxon>
        <taxon>Thermotogaceae</taxon>
        <taxon>Thermotoga</taxon>
    </lineage>
</organism>
<comment type="function">
    <text evidence="1">Catalyzes the sequential NAD-dependent oxidations of L-histidinol to L-histidinaldehyde and then to L-histidine.</text>
</comment>
<comment type="catalytic activity">
    <reaction evidence="1">
        <text>L-histidinol + 2 NAD(+) + H2O = L-histidine + 2 NADH + 3 H(+)</text>
        <dbReference type="Rhea" id="RHEA:20641"/>
        <dbReference type="ChEBI" id="CHEBI:15377"/>
        <dbReference type="ChEBI" id="CHEBI:15378"/>
        <dbReference type="ChEBI" id="CHEBI:57540"/>
        <dbReference type="ChEBI" id="CHEBI:57595"/>
        <dbReference type="ChEBI" id="CHEBI:57699"/>
        <dbReference type="ChEBI" id="CHEBI:57945"/>
        <dbReference type="EC" id="1.1.1.23"/>
    </reaction>
</comment>
<comment type="cofactor">
    <cofactor evidence="1">
        <name>Zn(2+)</name>
        <dbReference type="ChEBI" id="CHEBI:29105"/>
    </cofactor>
    <text evidence="1">Binds 1 zinc ion per subunit.</text>
</comment>
<comment type="pathway">
    <text evidence="1">Amino-acid biosynthesis; L-histidine biosynthesis; L-histidine from 5-phospho-alpha-D-ribose 1-diphosphate: step 9/9.</text>
</comment>
<comment type="similarity">
    <text evidence="1">Belongs to the histidinol dehydrogenase family.</text>
</comment>
<keyword id="KW-0028">Amino-acid biosynthesis</keyword>
<keyword id="KW-0368">Histidine biosynthesis</keyword>
<keyword id="KW-0479">Metal-binding</keyword>
<keyword id="KW-0520">NAD</keyword>
<keyword id="KW-0560">Oxidoreductase</keyword>
<keyword id="KW-1185">Reference proteome</keyword>
<keyword id="KW-0862">Zinc</keyword>
<reference key="1">
    <citation type="journal article" date="1999" name="Nature">
        <title>Evidence for lateral gene transfer between Archaea and Bacteria from genome sequence of Thermotoga maritima.</title>
        <authorList>
            <person name="Nelson K.E."/>
            <person name="Clayton R.A."/>
            <person name="Gill S.R."/>
            <person name="Gwinn M.L."/>
            <person name="Dodson R.J."/>
            <person name="Haft D.H."/>
            <person name="Hickey E.K."/>
            <person name="Peterson J.D."/>
            <person name="Nelson W.C."/>
            <person name="Ketchum K.A."/>
            <person name="McDonald L.A."/>
            <person name="Utterback T.R."/>
            <person name="Malek J.A."/>
            <person name="Linher K.D."/>
            <person name="Garrett M.M."/>
            <person name="Stewart A.M."/>
            <person name="Cotton M.D."/>
            <person name="Pratt M.S."/>
            <person name="Phillips C.A."/>
            <person name="Richardson D.L."/>
            <person name="Heidelberg J.F."/>
            <person name="Sutton G.G."/>
            <person name="Fleischmann R.D."/>
            <person name="Eisen J.A."/>
            <person name="White O."/>
            <person name="Salzberg S.L."/>
            <person name="Smith H.O."/>
            <person name="Venter J.C."/>
            <person name="Fraser C.M."/>
        </authorList>
    </citation>
    <scope>NUCLEOTIDE SEQUENCE [LARGE SCALE GENOMIC DNA]</scope>
    <source>
        <strain>ATCC 43589 / DSM 3109 / JCM 10099 / NBRC 100826 / MSB8</strain>
    </source>
</reference>
<feature type="chain" id="PRO_0000135869" description="Histidinol dehydrogenase">
    <location>
        <begin position="1"/>
        <end position="428"/>
    </location>
</feature>
<feature type="active site" description="Proton acceptor" evidence="1">
    <location>
        <position position="324"/>
    </location>
</feature>
<feature type="active site" description="Proton acceptor" evidence="1">
    <location>
        <position position="325"/>
    </location>
</feature>
<feature type="binding site" evidence="1">
    <location>
        <position position="232"/>
    </location>
    <ligand>
        <name>substrate</name>
    </ligand>
</feature>
<feature type="binding site" evidence="1">
    <location>
        <position position="254"/>
    </location>
    <ligand>
        <name>substrate</name>
    </ligand>
</feature>
<feature type="binding site" evidence="1">
    <location>
        <position position="254"/>
    </location>
    <ligand>
        <name>Zn(2+)</name>
        <dbReference type="ChEBI" id="CHEBI:29105"/>
    </ligand>
</feature>
<feature type="binding site" evidence="1">
    <location>
        <position position="257"/>
    </location>
    <ligand>
        <name>substrate</name>
    </ligand>
</feature>
<feature type="binding site" evidence="1">
    <location>
        <position position="257"/>
    </location>
    <ligand>
        <name>Zn(2+)</name>
        <dbReference type="ChEBI" id="CHEBI:29105"/>
    </ligand>
</feature>
<feature type="binding site" evidence="1">
    <location>
        <position position="325"/>
    </location>
    <ligand>
        <name>substrate</name>
    </ligand>
</feature>
<feature type="binding site" evidence="1">
    <location>
        <position position="358"/>
    </location>
    <ligand>
        <name>substrate</name>
    </ligand>
</feature>
<feature type="binding site" evidence="1">
    <location>
        <position position="358"/>
    </location>
    <ligand>
        <name>Zn(2+)</name>
        <dbReference type="ChEBI" id="CHEBI:29105"/>
    </ligand>
</feature>
<feature type="binding site" evidence="1">
    <location>
        <position position="412"/>
    </location>
    <ligand>
        <name>substrate</name>
    </ligand>
</feature>
<feature type="binding site" evidence="1">
    <location>
        <position position="417"/>
    </location>
    <ligand>
        <name>substrate</name>
    </ligand>
</feature>
<feature type="binding site" evidence="1">
    <location>
        <position position="417"/>
    </location>
    <ligand>
        <name>Zn(2+)</name>
        <dbReference type="ChEBI" id="CHEBI:29105"/>
    </ligand>
</feature>
<gene>
    <name evidence="1" type="primary">hisD</name>
    <name type="ordered locus">TM_1041</name>
</gene>
<protein>
    <recommendedName>
        <fullName evidence="1">Histidinol dehydrogenase</fullName>
        <shortName evidence="1">HDH</shortName>
        <ecNumber evidence="1">1.1.1.23</ecNumber>
    </recommendedName>
</protein>
<dbReference type="EC" id="1.1.1.23" evidence="1"/>
<dbReference type="EMBL" id="AE000512">
    <property type="protein sequence ID" value="AAD36118.1"/>
    <property type="molecule type" value="Genomic_DNA"/>
</dbReference>
<dbReference type="PIR" id="H72304">
    <property type="entry name" value="H72304"/>
</dbReference>
<dbReference type="RefSeq" id="NP_228847.1">
    <property type="nucleotide sequence ID" value="NC_000853.1"/>
</dbReference>
<dbReference type="RefSeq" id="WP_004080480.1">
    <property type="nucleotide sequence ID" value="NZ_CP011107.1"/>
</dbReference>
<dbReference type="SMR" id="Q9X0D1"/>
<dbReference type="FunCoup" id="Q9X0D1">
    <property type="interactions" value="398"/>
</dbReference>
<dbReference type="STRING" id="243274.TM_1041"/>
<dbReference type="PaxDb" id="243274-THEMA_09155"/>
<dbReference type="EnsemblBacteria" id="AAD36118">
    <property type="protein sequence ID" value="AAD36118"/>
    <property type="gene ID" value="TM_1041"/>
</dbReference>
<dbReference type="KEGG" id="tma:TM1041"/>
<dbReference type="KEGG" id="tmi:THEMA_09155"/>
<dbReference type="KEGG" id="tmm:Tmari_1045"/>
<dbReference type="KEGG" id="tmw:THMA_1063"/>
<dbReference type="eggNOG" id="COG0141">
    <property type="taxonomic scope" value="Bacteria"/>
</dbReference>
<dbReference type="InParanoid" id="Q9X0D1"/>
<dbReference type="OrthoDB" id="9805269at2"/>
<dbReference type="UniPathway" id="UPA00031">
    <property type="reaction ID" value="UER00014"/>
</dbReference>
<dbReference type="Proteomes" id="UP000008183">
    <property type="component" value="Chromosome"/>
</dbReference>
<dbReference type="GO" id="GO:0005737">
    <property type="term" value="C:cytoplasm"/>
    <property type="evidence" value="ECO:0000318"/>
    <property type="project" value="GO_Central"/>
</dbReference>
<dbReference type="GO" id="GO:0005829">
    <property type="term" value="C:cytosol"/>
    <property type="evidence" value="ECO:0000318"/>
    <property type="project" value="GO_Central"/>
</dbReference>
<dbReference type="GO" id="GO:0004399">
    <property type="term" value="F:histidinol dehydrogenase activity"/>
    <property type="evidence" value="ECO:0000318"/>
    <property type="project" value="GO_Central"/>
</dbReference>
<dbReference type="GO" id="GO:0051287">
    <property type="term" value="F:NAD binding"/>
    <property type="evidence" value="ECO:0007669"/>
    <property type="project" value="InterPro"/>
</dbReference>
<dbReference type="GO" id="GO:0008270">
    <property type="term" value="F:zinc ion binding"/>
    <property type="evidence" value="ECO:0007669"/>
    <property type="project" value="UniProtKB-UniRule"/>
</dbReference>
<dbReference type="GO" id="GO:0000105">
    <property type="term" value="P:L-histidine biosynthetic process"/>
    <property type="evidence" value="ECO:0000318"/>
    <property type="project" value="GO_Central"/>
</dbReference>
<dbReference type="CDD" id="cd06572">
    <property type="entry name" value="Histidinol_dh"/>
    <property type="match status" value="1"/>
</dbReference>
<dbReference type="FunFam" id="3.40.50.1980:FF:000001">
    <property type="entry name" value="Histidinol dehydrogenase"/>
    <property type="match status" value="1"/>
</dbReference>
<dbReference type="FunFam" id="3.40.50.1980:FF:000026">
    <property type="entry name" value="Histidinol dehydrogenase"/>
    <property type="match status" value="1"/>
</dbReference>
<dbReference type="FunFam" id="1.20.5.1300:FF:000002">
    <property type="entry name" value="Histidinol dehydrogenase, chloroplastic"/>
    <property type="match status" value="1"/>
</dbReference>
<dbReference type="Gene3D" id="1.20.5.1300">
    <property type="match status" value="1"/>
</dbReference>
<dbReference type="Gene3D" id="3.40.50.1980">
    <property type="entry name" value="Nitrogenase molybdenum iron protein domain"/>
    <property type="match status" value="2"/>
</dbReference>
<dbReference type="HAMAP" id="MF_01024">
    <property type="entry name" value="HisD"/>
    <property type="match status" value="1"/>
</dbReference>
<dbReference type="InterPro" id="IPR016161">
    <property type="entry name" value="Ald_DH/histidinol_DH"/>
</dbReference>
<dbReference type="InterPro" id="IPR001692">
    <property type="entry name" value="Histidinol_DH_CS"/>
</dbReference>
<dbReference type="InterPro" id="IPR022695">
    <property type="entry name" value="Histidinol_DH_monofunct"/>
</dbReference>
<dbReference type="InterPro" id="IPR012131">
    <property type="entry name" value="Hstdl_DH"/>
</dbReference>
<dbReference type="NCBIfam" id="TIGR00069">
    <property type="entry name" value="hisD"/>
    <property type="match status" value="1"/>
</dbReference>
<dbReference type="PANTHER" id="PTHR21256:SF2">
    <property type="entry name" value="HISTIDINE BIOSYNTHESIS TRIFUNCTIONAL PROTEIN"/>
    <property type="match status" value="1"/>
</dbReference>
<dbReference type="PANTHER" id="PTHR21256">
    <property type="entry name" value="HISTIDINOL DEHYDROGENASE HDH"/>
    <property type="match status" value="1"/>
</dbReference>
<dbReference type="Pfam" id="PF00815">
    <property type="entry name" value="Histidinol_dh"/>
    <property type="match status" value="1"/>
</dbReference>
<dbReference type="PIRSF" id="PIRSF000099">
    <property type="entry name" value="Histidinol_dh"/>
    <property type="match status" value="1"/>
</dbReference>
<dbReference type="PRINTS" id="PR00083">
    <property type="entry name" value="HOLDHDRGNASE"/>
</dbReference>
<dbReference type="SUPFAM" id="SSF53720">
    <property type="entry name" value="ALDH-like"/>
    <property type="match status" value="1"/>
</dbReference>
<dbReference type="PROSITE" id="PS00611">
    <property type="entry name" value="HISOL_DEHYDROGENASE"/>
    <property type="match status" value="1"/>
</dbReference>
<sequence>MILMNNPGDKEVLRLLKQRMESVSQVEETVKEIIRRVKEEGDRALEEFLKRFEKHPVGIENLRVTEKEISEAQVEEEFVETIKIVIEDLKEFHRRQEERSFFFTTKGGSFLGEMVVPLESVGIYVPGGKVPYFSTLLMCAVPAIVAGVERIAVTTPPNENGGISPYILKTCEILGLKEIYRMGGAHAVAALTYGTETVKPVDKIVGPGGVFVTLAKKHVYGDVGIDSIAGPSEIAIVTDGSADLDLIAADFLSQAEHDENAMSVVITTSKEVFEKLPQVIERHLEALPEERRKTARISTENFGTIILTDSLKRAFEISNLIAPEHLEVLVENPFEPLGHIKNAGSVFLGKYTCESVGDYGAGPNHVLPTFRSARFSSGLRVSDFTKKIFITHLSEEDFRRKSELYSKMARWEGFEAHARAIDVRREKL</sequence>
<proteinExistence type="inferred from homology"/>
<accession>Q9X0D1</accession>
<name>HISX_THEMA</name>
<evidence type="ECO:0000255" key="1">
    <source>
        <dbReference type="HAMAP-Rule" id="MF_01024"/>
    </source>
</evidence>